<reference key="1">
    <citation type="journal article" date="1993" name="Gene">
        <title>Genes required for extracellular secretion of enterotoxin are clustered in Vibrio cholerae.</title>
        <authorList>
            <person name="Overbye L.J."/>
            <person name="Sandkvist M."/>
            <person name="Bagdasarian M."/>
        </authorList>
    </citation>
    <scope>NUCLEOTIDE SEQUENCE [GENOMIC DNA]</scope>
    <source>
        <strain>El Tor TRH7000</strain>
    </source>
</reference>
<reference key="2">
    <citation type="journal article" date="2000" name="Nature">
        <title>DNA sequence of both chromosomes of the cholera pathogen Vibrio cholerae.</title>
        <authorList>
            <person name="Heidelberg J.F."/>
            <person name="Eisen J.A."/>
            <person name="Nelson W.C."/>
            <person name="Clayton R.A."/>
            <person name="Gwinn M.L."/>
            <person name="Dodson R.J."/>
            <person name="Haft D.H."/>
            <person name="Hickey E.K."/>
            <person name="Peterson J.D."/>
            <person name="Umayam L.A."/>
            <person name="Gill S.R."/>
            <person name="Nelson K.E."/>
            <person name="Read T.D."/>
            <person name="Tettelin H."/>
            <person name="Richardson D.L."/>
            <person name="Ermolaeva M.D."/>
            <person name="Vamathevan J.J."/>
            <person name="Bass S."/>
            <person name="Qin H."/>
            <person name="Dragoi I."/>
            <person name="Sellers P."/>
            <person name="McDonald L.A."/>
            <person name="Utterback T.R."/>
            <person name="Fleischmann R.D."/>
            <person name="Nierman W.C."/>
            <person name="White O."/>
            <person name="Salzberg S.L."/>
            <person name="Smith H.O."/>
            <person name="Colwell R.R."/>
            <person name="Mekalanos J.J."/>
            <person name="Venter J.C."/>
            <person name="Fraser C.M."/>
        </authorList>
    </citation>
    <scope>NUCLEOTIDE SEQUENCE [LARGE SCALE GENOMIC DNA]</scope>
    <source>
        <strain>ATCC 39315 / El Tor Inaba N16961</strain>
    </source>
</reference>
<reference key="3">
    <citation type="journal article" date="1999" name="J. Bacteriol.">
        <title>Direct interaction of the EpsL and EpsM proteins of the general secretion apparatus in Vibrio cholerae.</title>
        <authorList>
            <person name="Sandkvist M."/>
            <person name="Hough L.P."/>
            <person name="Bagdasarian M.M."/>
            <person name="Bagdasarian M."/>
        </authorList>
    </citation>
    <scope>FUNCTION</scope>
    <scope>SUBCELLULAR LOCATION</scope>
    <scope>INTERACTION WITH EPSL</scope>
</reference>
<reference key="4">
    <citation type="journal article" date="2000" name="J. Bacteriol.">
        <title>Two regions of EpsL involved in species-specific protein-protein interactions with EpsE and EpsM of the general secretion pathway in Vibrio cholerae.</title>
        <authorList>
            <person name="Sandkvist M."/>
            <person name="Keith J.M."/>
            <person name="Bagdasarian M."/>
            <person name="Howard S.P."/>
        </authorList>
    </citation>
    <scope>FUNCTION</scope>
    <scope>INTERACTION WITH EPSE AND EPSL</scope>
</reference>
<reference key="5">
    <citation type="journal article" date="2007" name="J. Bacteriol.">
        <title>Mapping critical interactive sites within the periplasmic domain of the Vibrio cholerae type II secretion protein EpsM.</title>
        <authorList>
            <person name="Johnson T.L."/>
            <person name="Scott M.E."/>
            <person name="Sandkvist M."/>
        </authorList>
    </citation>
    <scope>SUBUNIT</scope>
    <scope>INTERACTION WITH EPSL</scope>
    <scope>DOMAIN</scope>
</reference>
<reference key="6">
    <citation type="journal article" date="2009" name="J. Bacteriol.">
        <title>Docking and assembly of the type II secretion complex of Vibrio cholerae.</title>
        <authorList>
            <person name="Lybarger S.R."/>
            <person name="Johnson T.L."/>
            <person name="Gray M.D."/>
            <person name="Sikora A.E."/>
            <person name="Sandkvist M."/>
        </authorList>
    </citation>
    <scope>FUNCTION</scope>
    <scope>DISRUPTION PHENOTYPE</scope>
</reference>
<reference key="7">
    <citation type="journal article" date="2004" name="J. Mol. Biol.">
        <title>The crystal structure of the periplasmic domain of the type II secretion system protein EpsM from Vibrio cholerae: the simplest version of the ferredoxin fold.</title>
        <authorList>
            <person name="Abendroth J."/>
            <person name="Rice A.E."/>
            <person name="McLuskey K."/>
            <person name="Bagdasarian M."/>
            <person name="Hol W.G."/>
        </authorList>
    </citation>
    <scope>X-RAY CRYSTALLOGRAPHY (1.70 ANGSTROMS) OF 65-165</scope>
    <scope>SUBUNIT</scope>
</reference>
<evidence type="ECO:0000250" key="1">
    <source>
        <dbReference type="UniProtKB" id="P25061"/>
    </source>
</evidence>
<evidence type="ECO:0000250" key="2">
    <source>
        <dbReference type="UniProtKB" id="Q00514"/>
    </source>
</evidence>
<evidence type="ECO:0000255" key="3"/>
<evidence type="ECO:0000269" key="4">
    <source>
    </source>
</evidence>
<evidence type="ECO:0000269" key="5">
    <source>
    </source>
</evidence>
<evidence type="ECO:0000269" key="6">
    <source>
    </source>
</evidence>
<evidence type="ECO:0000269" key="7">
    <source>
    </source>
</evidence>
<evidence type="ECO:0000269" key="8">
    <source>
    </source>
</evidence>
<evidence type="ECO:0000305" key="9"/>
<evidence type="ECO:0007829" key="10">
    <source>
        <dbReference type="PDB" id="1UV7"/>
    </source>
</evidence>
<dbReference type="EMBL" id="L13660">
    <property type="protein sequence ID" value="AAA60935.1"/>
    <property type="molecule type" value="Genomic_DNA"/>
</dbReference>
<dbReference type="EMBL" id="L33796">
    <property type="protein sequence ID" value="AAA58794.1"/>
    <property type="molecule type" value="Genomic_DNA"/>
</dbReference>
<dbReference type="EMBL" id="AE003852">
    <property type="protein sequence ID" value="AAF95864.1"/>
    <property type="status" value="ALT_INIT"/>
    <property type="molecule type" value="Genomic_DNA"/>
</dbReference>
<dbReference type="PIR" id="F82040">
    <property type="entry name" value="F82040"/>
</dbReference>
<dbReference type="PIR" id="JN0847">
    <property type="entry name" value="JN0847"/>
</dbReference>
<dbReference type="RefSeq" id="NP_232351.1">
    <property type="nucleotide sequence ID" value="NC_002505.1"/>
</dbReference>
<dbReference type="RefSeq" id="WP_000661339.1">
    <property type="nucleotide sequence ID" value="NZ_LT906614.1"/>
</dbReference>
<dbReference type="PDB" id="1UV7">
    <property type="method" value="X-ray"/>
    <property type="resolution" value="1.70 A"/>
    <property type="chains" value="A/B=65-165"/>
</dbReference>
<dbReference type="PDBsum" id="1UV7"/>
<dbReference type="SMR" id="P41851"/>
<dbReference type="IntAct" id="P41851">
    <property type="interactions" value="1"/>
</dbReference>
<dbReference type="STRING" id="243277.VC_2724"/>
<dbReference type="DNASU" id="2615552"/>
<dbReference type="EnsemblBacteria" id="AAF95864">
    <property type="protein sequence ID" value="AAF95864"/>
    <property type="gene ID" value="VC_2724"/>
</dbReference>
<dbReference type="KEGG" id="vch:VC_2724"/>
<dbReference type="PATRIC" id="fig|243277.26.peg.2599"/>
<dbReference type="eggNOG" id="COG3149">
    <property type="taxonomic scope" value="Bacteria"/>
</dbReference>
<dbReference type="HOGENOM" id="CLU_118900_3_0_6"/>
<dbReference type="EvolutionaryTrace" id="P41851"/>
<dbReference type="Proteomes" id="UP000000584">
    <property type="component" value="Chromosome 1"/>
</dbReference>
<dbReference type="GO" id="GO:0005886">
    <property type="term" value="C:plasma membrane"/>
    <property type="evidence" value="ECO:0007669"/>
    <property type="project" value="UniProtKB-SubCell"/>
</dbReference>
<dbReference type="GO" id="GO:0015627">
    <property type="term" value="C:type II protein secretion system complex"/>
    <property type="evidence" value="ECO:0007669"/>
    <property type="project" value="InterPro"/>
</dbReference>
<dbReference type="GO" id="GO:0015628">
    <property type="term" value="P:protein secretion by the type II secretion system"/>
    <property type="evidence" value="ECO:0007669"/>
    <property type="project" value="InterPro"/>
</dbReference>
<dbReference type="DisProt" id="DP00725"/>
<dbReference type="FunFam" id="3.30.1360.100:FF:000002">
    <property type="entry name" value="Type II secretion system protein M"/>
    <property type="match status" value="1"/>
</dbReference>
<dbReference type="Gene3D" id="3.30.1360.100">
    <property type="entry name" value="General secretion pathway protein M, EpsM"/>
    <property type="match status" value="1"/>
</dbReference>
<dbReference type="InterPro" id="IPR007690">
    <property type="entry name" value="T2SS_GspM"/>
</dbReference>
<dbReference type="InterPro" id="IPR023229">
    <property type="entry name" value="T2SS_M_periplasmic_sf"/>
</dbReference>
<dbReference type="Pfam" id="PF04612">
    <property type="entry name" value="T2SSM"/>
    <property type="match status" value="1"/>
</dbReference>
<dbReference type="PIRSF" id="PIRSF006291">
    <property type="entry name" value="GspM"/>
    <property type="match status" value="1"/>
</dbReference>
<dbReference type="SUPFAM" id="SSF103054">
    <property type="entry name" value="General secretion pathway protein M, EpsM"/>
    <property type="match status" value="1"/>
</dbReference>
<gene>
    <name type="primary">epsM</name>
    <name type="ordered locus">VC_2724</name>
</gene>
<name>GSPM_VIBCH</name>
<comment type="function">
    <text evidence="4 5 8">Inner membrane component of the type II secretion system required for the energy-dependent secretion of extracellular factors such as proteases and toxins from the periplasm. Plays a role in the complex assembly and recruits EpsL resulting in a stable complex in the inner membrane. Provides thus a link between the energy-providing EpsE protein in the cytoplasm and the rest of the T2SS machinery.</text>
</comment>
<comment type="subunit">
    <text evidence="2 4 5 6 7">Type II secretion system is composed of four main components: the outer membrane complex, the inner membrane complex, the cytoplasmic secretion ATPase and the periplasm-spanning pseudopilus (By similarity). Forms homodimers (PubMed:15081815, PubMed:17921296). Interacts with EpsL/GspL (PubMed:10322014, PubMed:10633109). Interacts with EpsE/GspE (PubMed:10633109). Interacts with EpsF/GspF (PubMed:10633109).</text>
</comment>
<comment type="interaction">
    <interactant intactId="EBI-6400843">
        <id>P41851</id>
    </interactant>
    <interactant intactId="EBI-6400836">
        <id>P45782</id>
        <label>epsL</label>
    </interactant>
    <organismsDiffer>false</organismsDiffer>
    <experiments>2</experiments>
</comment>
<comment type="subcellular location">
    <subcellularLocation>
        <location evidence="9">Cell inner membrane</location>
        <topology evidence="9">Single-pass membrane protein</topology>
    </subcellularLocation>
</comment>
<comment type="domain">
    <text evidence="7">The periplasmic region found in the proximity of the transmembrane appears to be critical for a stable interaction with EpsL.</text>
</comment>
<comment type="disruption phenotype">
    <text evidence="8">Absence of EpsM results in a decreased amount of EpsL in type II secretion system complexes.</text>
</comment>
<comment type="similarity">
    <text evidence="9">Belongs to the GSP M family.</text>
</comment>
<comment type="sequence caution" evidence="9">
    <conflict type="erroneous initiation">
        <sequence resource="EMBL-CDS" id="AAF95864"/>
    </conflict>
    <text>Truncated N-terminus.</text>
</comment>
<organism>
    <name type="scientific">Vibrio cholerae serotype O1 (strain ATCC 39315 / El Tor Inaba N16961)</name>
    <dbReference type="NCBI Taxonomy" id="243277"/>
    <lineage>
        <taxon>Bacteria</taxon>
        <taxon>Pseudomonadati</taxon>
        <taxon>Pseudomonadota</taxon>
        <taxon>Gammaproteobacteria</taxon>
        <taxon>Vibrionales</taxon>
        <taxon>Vibrionaceae</taxon>
        <taxon>Vibrio</taxon>
    </lineage>
</organism>
<accession>P41851</accession>
<accession>Q9KNK8</accession>
<feature type="chain" id="PRO_0000207328" description="Type II secretion system protein M">
    <location>
        <begin position="1"/>
        <end position="165"/>
    </location>
</feature>
<feature type="topological domain" description="Cytoplasmic" evidence="1">
    <location>
        <begin position="1"/>
        <end position="22"/>
    </location>
</feature>
<feature type="transmembrane region" description="Helical" evidence="3">
    <location>
        <begin position="23"/>
        <end position="43"/>
    </location>
</feature>
<feature type="topological domain" description="Periplasmic" evidence="1">
    <location>
        <begin position="44"/>
        <end position="165"/>
    </location>
</feature>
<feature type="helix" evidence="10">
    <location>
        <begin position="88"/>
        <end position="99"/>
    </location>
</feature>
<feature type="strand" evidence="10">
    <location>
        <begin position="103"/>
        <end position="108"/>
    </location>
</feature>
<feature type="strand" evidence="10">
    <location>
        <begin position="110"/>
        <end position="117"/>
    </location>
</feature>
<feature type="helix" evidence="10">
    <location>
        <begin position="122"/>
        <end position="135"/>
    </location>
</feature>
<feature type="strand" evidence="10">
    <location>
        <begin position="139"/>
        <end position="147"/>
    </location>
</feature>
<feature type="strand" evidence="10">
    <location>
        <begin position="154"/>
        <end position="162"/>
    </location>
</feature>
<proteinExistence type="evidence at protein level"/>
<protein>
    <recommendedName>
        <fullName>Type II secretion system protein M</fullName>
        <shortName>T2SS protein M</shortName>
    </recommendedName>
    <alternativeName>
        <fullName>Cholera toxin secretion protein EpsM</fullName>
    </alternativeName>
    <alternativeName>
        <fullName>General secretion pathway protein M</fullName>
    </alternativeName>
</protein>
<sequence length="165" mass="18652">MKELLAPVQAWWRSVTPREQKMVMGMGALTVLAIAYWGIWQPLSERTAQAQARLQTEKQLLSWVSENANDIVTLRAQGGSDAPSDQPLNQVITNSTRQFNIELIRVQPRGEMMQVWIQPLPFSQLVSWIAYLQERQGVSVDAIDIDRGKVNGVVEVKRLQLKRGG</sequence>
<keyword id="KW-0002">3D-structure</keyword>
<keyword id="KW-0997">Cell inner membrane</keyword>
<keyword id="KW-1003">Cell membrane</keyword>
<keyword id="KW-0472">Membrane</keyword>
<keyword id="KW-0653">Protein transport</keyword>
<keyword id="KW-1185">Reference proteome</keyword>
<keyword id="KW-0812">Transmembrane</keyword>
<keyword id="KW-1133">Transmembrane helix</keyword>
<keyword id="KW-0813">Transport</keyword>